<accession>Q758B5</accession>
<organism>
    <name type="scientific">Eremothecium gossypii (strain ATCC 10895 / CBS 109.51 / FGSC 9923 / NRRL Y-1056)</name>
    <name type="common">Yeast</name>
    <name type="synonym">Ashbya gossypii</name>
    <dbReference type="NCBI Taxonomy" id="284811"/>
    <lineage>
        <taxon>Eukaryota</taxon>
        <taxon>Fungi</taxon>
        <taxon>Dikarya</taxon>
        <taxon>Ascomycota</taxon>
        <taxon>Saccharomycotina</taxon>
        <taxon>Saccharomycetes</taxon>
        <taxon>Saccharomycetales</taxon>
        <taxon>Saccharomycetaceae</taxon>
        <taxon>Eremothecium</taxon>
    </lineage>
</organism>
<protein>
    <recommendedName>
        <fullName>Cytochrome c oxidase assembly factor 3, mitochondrial</fullName>
    </recommendedName>
</protein>
<dbReference type="EMBL" id="AE016818">
    <property type="protein sequence ID" value="AAS52522.1"/>
    <property type="molecule type" value="Genomic_DNA"/>
</dbReference>
<dbReference type="RefSeq" id="NP_984698.1">
    <property type="nucleotide sequence ID" value="NM_210051.1"/>
</dbReference>
<dbReference type="SMR" id="Q758B5"/>
<dbReference type="FunCoup" id="Q758B5">
    <property type="interactions" value="35"/>
</dbReference>
<dbReference type="STRING" id="284811.Q758B5"/>
<dbReference type="EnsemblFungi" id="AAS52522">
    <property type="protein sequence ID" value="AAS52522"/>
    <property type="gene ID" value="AGOS_AEL163C"/>
</dbReference>
<dbReference type="GeneID" id="4620883"/>
<dbReference type="KEGG" id="ago:AGOS_AEL163C"/>
<dbReference type="eggNOG" id="ENOG502S440">
    <property type="taxonomic scope" value="Eukaryota"/>
</dbReference>
<dbReference type="HOGENOM" id="CLU_153999_0_0_1"/>
<dbReference type="InParanoid" id="Q758B5"/>
<dbReference type="OMA" id="WKMTPAM"/>
<dbReference type="OrthoDB" id="10018333at2759"/>
<dbReference type="Proteomes" id="UP000000591">
    <property type="component" value="Chromosome V"/>
</dbReference>
<dbReference type="GO" id="GO:0005743">
    <property type="term" value="C:mitochondrial inner membrane"/>
    <property type="evidence" value="ECO:0000318"/>
    <property type="project" value="GO_Central"/>
</dbReference>
<dbReference type="GO" id="GO:0033617">
    <property type="term" value="P:mitochondrial cytochrome c oxidase assembly"/>
    <property type="evidence" value="ECO:0000318"/>
    <property type="project" value="GO_Central"/>
</dbReference>
<dbReference type="InterPro" id="IPR041752">
    <property type="entry name" value="Coa3"/>
</dbReference>
<dbReference type="InterPro" id="IPR018628">
    <property type="entry name" value="Coa3_cc"/>
</dbReference>
<dbReference type="PANTHER" id="PTHR15642:SF3">
    <property type="entry name" value="CYTOCHROME C OXIDASE ASSEMBLY FACTOR 3 HOMOLOG, MITOCHONDRIAL"/>
    <property type="match status" value="1"/>
</dbReference>
<dbReference type="PANTHER" id="PTHR15642">
    <property type="entry name" value="CYTOCHROME C OXIDASE ASSEMBLY FACTOR 3, MITOCHONDRIAL"/>
    <property type="match status" value="1"/>
</dbReference>
<dbReference type="Pfam" id="PF09813">
    <property type="entry name" value="Coa3_cc"/>
    <property type="match status" value="1"/>
</dbReference>
<gene>
    <name type="primary">COA3</name>
    <name type="ordered locus">AEL163C</name>
</gene>
<reference key="1">
    <citation type="journal article" date="2004" name="Science">
        <title>The Ashbya gossypii genome as a tool for mapping the ancient Saccharomyces cerevisiae genome.</title>
        <authorList>
            <person name="Dietrich F.S."/>
            <person name="Voegeli S."/>
            <person name="Brachat S."/>
            <person name="Lerch A."/>
            <person name="Gates K."/>
            <person name="Steiner S."/>
            <person name="Mohr C."/>
            <person name="Poehlmann R."/>
            <person name="Luedi P."/>
            <person name="Choi S."/>
            <person name="Wing R.A."/>
            <person name="Flavier A."/>
            <person name="Gaffney T.D."/>
            <person name="Philippsen P."/>
        </authorList>
    </citation>
    <scope>NUCLEOTIDE SEQUENCE [LARGE SCALE GENOMIC DNA]</scope>
    <source>
        <strain>ATCC 10895 / CBS 109.51 / FGSC 9923 / NRRL Y-1056</strain>
    </source>
</reference>
<reference key="2">
    <citation type="journal article" date="2013" name="G3 (Bethesda)">
        <title>Genomes of Ashbya fungi isolated from insects reveal four mating-type loci, numerous translocations, lack of transposons, and distinct gene duplications.</title>
        <authorList>
            <person name="Dietrich F.S."/>
            <person name="Voegeli S."/>
            <person name="Kuo S."/>
            <person name="Philippsen P."/>
        </authorList>
    </citation>
    <scope>GENOME REANNOTATION</scope>
    <source>
        <strain>ATCC 10895 / CBS 109.51 / FGSC 9923 / NRRL Y-1056</strain>
    </source>
</reference>
<proteinExistence type="inferred from homology"/>
<evidence type="ECO:0000250" key="1"/>
<evidence type="ECO:0000255" key="2"/>
<evidence type="ECO:0000305" key="3"/>
<feature type="chain" id="PRO_0000405436" description="Cytochrome c oxidase assembly factor 3, mitochondrial">
    <location>
        <begin position="1"/>
        <end position="89"/>
    </location>
</feature>
<feature type="topological domain" description="Mitochondrial matrix" evidence="1">
    <location>
        <begin position="1"/>
        <end position="28"/>
    </location>
</feature>
<feature type="transmembrane region" description="Helical" evidence="2">
    <location>
        <begin position="29"/>
        <end position="51"/>
    </location>
</feature>
<feature type="topological domain" description="Mitochondrial intermembrane" evidence="1">
    <location>
        <begin position="52"/>
        <end position="89"/>
    </location>
</feature>
<sequence>MLEPSRYQDPRTWKMTPAMIRARRPYIRGNLFGLVTLLGVAGGIYVYTYRALHKDDDFADVPIPPVSEEELRQLRQEYELHKKQRAAER</sequence>
<comment type="function">
    <text evidence="1">Required for assembly of cytochrome c oxidase (complex IV).</text>
</comment>
<comment type="subunit">
    <text evidence="1">Component of 250-400 kDa complexes called cytochrome oxidase assembly intermediates or COA complexes.</text>
</comment>
<comment type="subcellular location">
    <subcellularLocation>
        <location>Mitochondrion inner membrane</location>
        <topology>Single-pass membrane protein</topology>
    </subcellularLocation>
</comment>
<comment type="similarity">
    <text evidence="3">Belongs to the COA3 family.</text>
</comment>
<name>COA3_EREGS</name>
<keyword id="KW-0472">Membrane</keyword>
<keyword id="KW-0496">Mitochondrion</keyword>
<keyword id="KW-0999">Mitochondrion inner membrane</keyword>
<keyword id="KW-1185">Reference proteome</keyword>
<keyword id="KW-0812">Transmembrane</keyword>
<keyword id="KW-1133">Transmembrane helix</keyword>